<dbReference type="EMBL" id="CP000936">
    <property type="protein sequence ID" value="ACA35801.1"/>
    <property type="molecule type" value="Genomic_DNA"/>
</dbReference>
<dbReference type="RefSeq" id="WP_000354917.1">
    <property type="nucleotide sequence ID" value="NC_010380.1"/>
</dbReference>
<dbReference type="SMR" id="B1I8M7"/>
<dbReference type="KEGG" id="spv:SPH_0352"/>
<dbReference type="HOGENOM" id="CLU_048704_0_0_9"/>
<dbReference type="Proteomes" id="UP000002163">
    <property type="component" value="Chromosome"/>
</dbReference>
<dbReference type="CDD" id="cd08025">
    <property type="entry name" value="RNR_PFL_like_DUF711"/>
    <property type="match status" value="1"/>
</dbReference>
<dbReference type="Gene3D" id="3.20.70.20">
    <property type="match status" value="1"/>
</dbReference>
<dbReference type="HAMAP" id="MF_01221">
    <property type="entry name" value="UPF0210"/>
    <property type="match status" value="1"/>
</dbReference>
<dbReference type="InterPro" id="IPR007841">
    <property type="entry name" value="UPF0210"/>
</dbReference>
<dbReference type="NCBIfam" id="NF003700">
    <property type="entry name" value="PRK05313.1"/>
    <property type="match status" value="1"/>
</dbReference>
<dbReference type="PANTHER" id="PTHR37560:SF1">
    <property type="entry name" value="UPF0210 PROTEIN MJ1665"/>
    <property type="match status" value="1"/>
</dbReference>
<dbReference type="PANTHER" id="PTHR37560">
    <property type="entry name" value="UPF0210 PROTEIN SPR0218"/>
    <property type="match status" value="1"/>
</dbReference>
<dbReference type="Pfam" id="PF05167">
    <property type="entry name" value="DUF711"/>
    <property type="match status" value="1"/>
</dbReference>
<dbReference type="SUPFAM" id="SSF51998">
    <property type="entry name" value="PFL-like glycyl radical enzymes"/>
    <property type="match status" value="1"/>
</dbReference>
<reference key="1">
    <citation type="journal article" date="2010" name="Genome Biol.">
        <title>Structure and dynamics of the pan-genome of Streptococcus pneumoniae and closely related species.</title>
        <authorList>
            <person name="Donati C."/>
            <person name="Hiller N.L."/>
            <person name="Tettelin H."/>
            <person name="Muzzi A."/>
            <person name="Croucher N.J."/>
            <person name="Angiuoli S.V."/>
            <person name="Oggioni M."/>
            <person name="Dunning Hotopp J.C."/>
            <person name="Hu F.Z."/>
            <person name="Riley D.R."/>
            <person name="Covacci A."/>
            <person name="Mitchell T.J."/>
            <person name="Bentley S.D."/>
            <person name="Kilian M."/>
            <person name="Ehrlich G.D."/>
            <person name="Rappuoli R."/>
            <person name="Moxon E.R."/>
            <person name="Masignani V."/>
        </authorList>
    </citation>
    <scope>NUCLEOTIDE SEQUENCE [LARGE SCALE GENOMIC DNA]</scope>
    <source>
        <strain>Hungary19A-6</strain>
    </source>
</reference>
<name>Y352_STRPI</name>
<evidence type="ECO:0000255" key="1">
    <source>
        <dbReference type="HAMAP-Rule" id="MF_01221"/>
    </source>
</evidence>
<proteinExistence type="inferred from homology"/>
<organism>
    <name type="scientific">Streptococcus pneumoniae (strain Hungary19A-6)</name>
    <dbReference type="NCBI Taxonomy" id="487214"/>
    <lineage>
        <taxon>Bacteria</taxon>
        <taxon>Bacillati</taxon>
        <taxon>Bacillota</taxon>
        <taxon>Bacilli</taxon>
        <taxon>Lactobacillales</taxon>
        <taxon>Streptococcaceae</taxon>
        <taxon>Streptococcus</taxon>
    </lineage>
</organism>
<accession>B1I8M7</accession>
<protein>
    <recommendedName>
        <fullName evidence="1">UPF0210 protein SPH_0352</fullName>
    </recommendedName>
</protein>
<comment type="subunit">
    <text evidence="1">Homodimer.</text>
</comment>
<comment type="similarity">
    <text evidence="1">Belongs to the UPF0210 family.</text>
</comment>
<feature type="chain" id="PRO_1000139234" description="UPF0210 protein SPH_0352">
    <location>
        <begin position="1"/>
        <end position="445"/>
    </location>
</feature>
<sequence>MDIRQVTETIAMIEEQNFDIRTITMGISLLDCIDPNINRAAEKIYQKITTKAANLVAVGDEIAAELGIPIVNKRVSVTPISLIGAATDATDYVVLAKALDKAAKEIGVDFIGGFSALVQKGYQKGDEILINSIPRALAETDKVCSSVNIGSTKSGINMTAVADMGRIIKETANLSDMGVAKLVVFANAVEDNPFMAGAFHGVGEADVIINVGVSGPGVVKRALEKVRGQSFDVVAETVKKTAFKITRIGQLVGQMASERLGVEFGIVDLSLAPTPAVGDSVARVLEEMGLETVGTHGTTAALALLNDQVKKGGVMACNQVGGLSGAFIPVSEDEGMIAAVQNGSLNLEKLEAMTAICSVGLDMIAIPEDTPAETIAAMIADEAAIGVINMKTTAVRIIPKGKEGDMIEFGGLLGTAPVMRVNGASSVDFISRGGQIPAPIHSFKN</sequence>
<gene>
    <name type="ordered locus">SPH_0352</name>
</gene>